<organism>
    <name type="scientific">Human herpesvirus 6B (strain Z29)</name>
    <name type="common">HHV-6 variant B</name>
    <name type="synonym">Human B lymphotropic virus</name>
    <dbReference type="NCBI Taxonomy" id="36351"/>
    <lineage>
        <taxon>Viruses</taxon>
        <taxon>Duplodnaviria</taxon>
        <taxon>Heunggongvirae</taxon>
        <taxon>Peploviricota</taxon>
        <taxon>Herviviricetes</taxon>
        <taxon>Herpesvirales</taxon>
        <taxon>Orthoherpesviridae</taxon>
        <taxon>Betaherpesvirinae</taxon>
        <taxon>Roseolovirus</taxon>
        <taxon>Roseolovirus humanbeta6b</taxon>
        <taxon>Human herpesvirus 6B</taxon>
    </lineage>
</organism>
<name>DR6_HHV6Z</name>
<reference key="1">
    <citation type="journal article" date="1999" name="J. Virol.">
        <title>Human herpesvirus 6B genome sequence: coding content and comparison with human herpesvirus 6A.</title>
        <authorList>
            <person name="Dominguez G."/>
            <person name="Dambaugh T.R."/>
            <person name="Stamey F.R."/>
            <person name="Dewhurst S."/>
            <person name="Inoue N."/>
            <person name="Pellett P.E."/>
        </authorList>
    </citation>
    <scope>NUCLEOTIDE SEQUENCE [LARGE SCALE GENOMIC DNA]</scope>
</reference>
<gene>
    <name type="primary">DR6</name>
</gene>
<accession>Q9PX53</accession>
<organismHost>
    <name type="scientific">Homo sapiens</name>
    <name type="common">Human</name>
    <dbReference type="NCBI Taxonomy" id="9606"/>
</organismHost>
<proteinExistence type="inferred from homology"/>
<protein>
    <recommendedName>
        <fullName>G2/M cell-cycle inhibitor DR6</fullName>
    </recommendedName>
</protein>
<sequence length="392" mass="44318">MTTRHTQTRDGRIAIRRDGARLAHARARARFEWLLLARGRPSKLYGYTSRHRGERIHLPWPRYWCLELHPDPYRDARSATVWGHRWGWPPTHVRPRSVQDCALDSSLYVCCGYGEKLQPVGFVSSYLTHSPLDTLRVLLVGRDGAVYVHHMRAARLCRLASNVTEFARRGLQRDPVAYEEDLELPDRRMCGTNVRHLFDVIAAAADEHDLLTVGGLCQTHAGVSCELLETVRDPWTAVPGVRMTLTVARAQYRLWPDARRQLRLHLYAGHPLGPWIVCAVLSRERETQTPSPPIGSGGVILGNVPTPGPREVETAWVIVTVAGPLLSFWPDNGKICRLANSFAALWRMGPRAMRGHWTYSAPGRHLPGDAWPLCEHVRPPVGKLPRQRAYLD</sequence>
<feature type="chain" id="PRO_0000408405" description="G2/M cell-cycle inhibitor DR6">
    <location>
        <begin position="1"/>
        <end position="392"/>
    </location>
</feature>
<evidence type="ECO:0000250" key="1">
    <source>
        <dbReference type="UniProtKB" id="Q89584"/>
    </source>
</evidence>
<evidence type="ECO:0000305" key="2"/>
<keyword id="KW-1048">Host nucleus</keyword>
<keyword id="KW-1185">Reference proteome</keyword>
<dbReference type="EMBL" id="AF157706">
    <property type="protein sequence ID" value="AAD49615.1"/>
    <property type="molecule type" value="Genomic_DNA"/>
</dbReference>
<dbReference type="EMBL" id="AF157706">
    <property type="protein sequence ID" value="AAD49686.1"/>
    <property type="molecule type" value="Genomic_DNA"/>
</dbReference>
<dbReference type="RefSeq" id="NP_050180.1">
    <property type="nucleotide sequence ID" value="NC_000898.1"/>
</dbReference>
<dbReference type="RefSeq" id="NP_050277.1">
    <property type="nucleotide sequence ID" value="NC_000898.1"/>
</dbReference>
<dbReference type="DNASU" id="1497019"/>
<dbReference type="GeneID" id="1497019"/>
<dbReference type="GeneID" id="1497098"/>
<dbReference type="KEGG" id="vg:1497019"/>
<dbReference type="KEGG" id="vg:1497098"/>
<dbReference type="Proteomes" id="UP000006930">
    <property type="component" value="Segment"/>
</dbReference>
<dbReference type="GO" id="GO:0042025">
    <property type="term" value="C:host cell nucleus"/>
    <property type="evidence" value="ECO:0007669"/>
    <property type="project" value="UniProtKB-SubCell"/>
</dbReference>
<dbReference type="InterPro" id="IPR003360">
    <property type="entry name" value="US22-like"/>
</dbReference>
<dbReference type="Pfam" id="PF02393">
    <property type="entry name" value="US22"/>
    <property type="match status" value="1"/>
</dbReference>
<comment type="function">
    <text evidence="1">Inhibits the host G2/M cell-cycle progression in a p53-independent manner.</text>
</comment>
<comment type="subcellular location">
    <subcellularLocation>
        <location evidence="1">Host nucleus</location>
    </subcellularLocation>
</comment>
<comment type="domain">
    <text evidence="1">The N-terminus is involved in nuclear targeting.</text>
</comment>
<comment type="similarity">
    <text evidence="2">Belongs to the Roseolovirus DR6 family.</text>
</comment>